<name>IFNG_CERAT</name>
<gene>
    <name type="primary">IFNG</name>
</gene>
<proteinExistence type="evidence at transcript level"/>
<organism>
    <name type="scientific">Cercocebus atys</name>
    <name type="common">Sooty mangabey</name>
    <name type="synonym">Cercocebus torquatus atys</name>
    <dbReference type="NCBI Taxonomy" id="9531"/>
    <lineage>
        <taxon>Eukaryota</taxon>
        <taxon>Metazoa</taxon>
        <taxon>Chordata</taxon>
        <taxon>Craniata</taxon>
        <taxon>Vertebrata</taxon>
        <taxon>Euteleostomi</taxon>
        <taxon>Mammalia</taxon>
        <taxon>Eutheria</taxon>
        <taxon>Euarchontoglires</taxon>
        <taxon>Primates</taxon>
        <taxon>Haplorrhini</taxon>
        <taxon>Catarrhini</taxon>
        <taxon>Cercopithecidae</taxon>
        <taxon>Cercopithecinae</taxon>
        <taxon>Cercocebus</taxon>
    </lineage>
</organism>
<sequence length="165" mass="19301">MKYTSYILAFQLCIVLGSLGCYCQDPYVKEAENLKKYFNAGDPDVADNGTLFLDILRNWKEESDRKIMQSQIVSFYFKLFKSFKDDQRIQKSVETIKEDINVKFFNSNKKKRDDFEKLTNYSVTDLNVQRKAVHELIQVMAELSPAAKIGKRKRSQTFRGRRASQ</sequence>
<dbReference type="EMBL" id="L26025">
    <property type="protein sequence ID" value="AAA99969.1"/>
    <property type="molecule type" value="mRNA"/>
</dbReference>
<dbReference type="RefSeq" id="XP_011947219.1">
    <property type="nucleotide sequence ID" value="XM_012091829.1"/>
</dbReference>
<dbReference type="SMR" id="P42162"/>
<dbReference type="STRING" id="9531.ENSCATP00000022573"/>
<dbReference type="GlyCosmos" id="P42162">
    <property type="glycosylation" value="2 sites, No reported glycans"/>
</dbReference>
<dbReference type="Ensembl" id="ENSCATT00000046784.1">
    <property type="protein sequence ID" value="ENSCATP00000022573.1"/>
    <property type="gene ID" value="ENSCATG00000034911.1"/>
</dbReference>
<dbReference type="GeneID" id="105600509"/>
<dbReference type="KEGG" id="caty:105600509"/>
<dbReference type="CTD" id="3458"/>
<dbReference type="GeneTree" id="ENSGT00390000007831"/>
<dbReference type="OMA" id="QIVSMYL"/>
<dbReference type="OrthoDB" id="3094at314294"/>
<dbReference type="Proteomes" id="UP000233060">
    <property type="component" value="Unassembled WGS sequence"/>
</dbReference>
<dbReference type="Bgee" id="ENSCATG00000034911">
    <property type="expression patterns" value="Expressed in lymph node and 1 other cell type or tissue"/>
</dbReference>
<dbReference type="GO" id="GO:0005615">
    <property type="term" value="C:extracellular space"/>
    <property type="evidence" value="ECO:0007669"/>
    <property type="project" value="UniProtKB-KW"/>
</dbReference>
<dbReference type="GO" id="GO:0005125">
    <property type="term" value="F:cytokine activity"/>
    <property type="evidence" value="ECO:0007669"/>
    <property type="project" value="UniProtKB-KW"/>
</dbReference>
<dbReference type="GO" id="GO:0005133">
    <property type="term" value="F:type II interferon receptor binding"/>
    <property type="evidence" value="ECO:0007669"/>
    <property type="project" value="InterPro"/>
</dbReference>
<dbReference type="GO" id="GO:0002250">
    <property type="term" value="P:adaptive immune response"/>
    <property type="evidence" value="ECO:0007669"/>
    <property type="project" value="TreeGrafter"/>
</dbReference>
<dbReference type="GO" id="GO:0048143">
    <property type="term" value="P:astrocyte activation"/>
    <property type="evidence" value="ECO:0007669"/>
    <property type="project" value="Ensembl"/>
</dbReference>
<dbReference type="GO" id="GO:0097696">
    <property type="term" value="P:cell surface receptor signaling pathway via STAT"/>
    <property type="evidence" value="ECO:0007669"/>
    <property type="project" value="Ensembl"/>
</dbReference>
<dbReference type="GO" id="GO:0051607">
    <property type="term" value="P:defense response to virus"/>
    <property type="evidence" value="ECO:0007669"/>
    <property type="project" value="UniProtKB-KW"/>
</dbReference>
<dbReference type="GO" id="GO:0097191">
    <property type="term" value="P:extrinsic apoptotic signaling pathway"/>
    <property type="evidence" value="ECO:0007669"/>
    <property type="project" value="Ensembl"/>
</dbReference>
<dbReference type="GO" id="GO:0038096">
    <property type="term" value="P:Fc-gamma receptor signaling pathway involved in phagocytosis"/>
    <property type="evidence" value="ECO:0007669"/>
    <property type="project" value="Ensembl"/>
</dbReference>
<dbReference type="GO" id="GO:0006959">
    <property type="term" value="P:humoral immune response"/>
    <property type="evidence" value="ECO:0007669"/>
    <property type="project" value="TreeGrafter"/>
</dbReference>
<dbReference type="GO" id="GO:0002281">
    <property type="term" value="P:macrophage activation involved in immune response"/>
    <property type="evidence" value="ECO:0007669"/>
    <property type="project" value="Ensembl"/>
</dbReference>
<dbReference type="GO" id="GO:0030225">
    <property type="term" value="P:macrophage differentiation"/>
    <property type="evidence" value="ECO:0007669"/>
    <property type="project" value="Ensembl"/>
</dbReference>
<dbReference type="GO" id="GO:0001774">
    <property type="term" value="P:microglial cell activation"/>
    <property type="evidence" value="ECO:0007669"/>
    <property type="project" value="Ensembl"/>
</dbReference>
<dbReference type="GO" id="GO:0045892">
    <property type="term" value="P:negative regulation of DNA-templated transcription"/>
    <property type="evidence" value="ECO:0007669"/>
    <property type="project" value="Ensembl"/>
</dbReference>
<dbReference type="GO" id="GO:0032700">
    <property type="term" value="P:negative regulation of interleukin-17 production"/>
    <property type="evidence" value="ECO:0007669"/>
    <property type="project" value="Ensembl"/>
</dbReference>
<dbReference type="GO" id="GO:0048662">
    <property type="term" value="P:negative regulation of smooth muscle cell proliferation"/>
    <property type="evidence" value="ECO:0007669"/>
    <property type="project" value="Ensembl"/>
</dbReference>
<dbReference type="GO" id="GO:1902004">
    <property type="term" value="P:positive regulation of amyloid-beta formation"/>
    <property type="evidence" value="ECO:0007669"/>
    <property type="project" value="Ensembl"/>
</dbReference>
<dbReference type="GO" id="GO:0010508">
    <property type="term" value="P:positive regulation of autophagy"/>
    <property type="evidence" value="ECO:0000250"/>
    <property type="project" value="UniProtKB"/>
</dbReference>
<dbReference type="GO" id="GO:0032834">
    <property type="term" value="P:positive regulation of CD4-positive, CD25-positive, alpha-beta regulatory T cell differentiation involved in immune response"/>
    <property type="evidence" value="ECO:0007669"/>
    <property type="project" value="Ensembl"/>
</dbReference>
<dbReference type="GO" id="GO:0032722">
    <property type="term" value="P:positive regulation of chemokine production"/>
    <property type="evidence" value="ECO:0007669"/>
    <property type="project" value="Ensembl"/>
</dbReference>
<dbReference type="GO" id="GO:0010634">
    <property type="term" value="P:positive regulation of epithelial cell migration"/>
    <property type="evidence" value="ECO:0007669"/>
    <property type="project" value="Ensembl"/>
</dbReference>
<dbReference type="GO" id="GO:0060552">
    <property type="term" value="P:positive regulation of fructose 1,6-bisphosphate metabolic process"/>
    <property type="evidence" value="ECO:0007669"/>
    <property type="project" value="Ensembl"/>
</dbReference>
<dbReference type="GO" id="GO:0050729">
    <property type="term" value="P:positive regulation of inflammatory response"/>
    <property type="evidence" value="ECO:0007669"/>
    <property type="project" value="Ensembl"/>
</dbReference>
<dbReference type="GO" id="GO:0032735">
    <property type="term" value="P:positive regulation of interleukin-12 production"/>
    <property type="evidence" value="ECO:0007669"/>
    <property type="project" value="Ensembl"/>
</dbReference>
<dbReference type="GO" id="GO:0032747">
    <property type="term" value="P:positive regulation of interleukin-23 production"/>
    <property type="evidence" value="ECO:0007669"/>
    <property type="project" value="Ensembl"/>
</dbReference>
<dbReference type="GO" id="GO:0032755">
    <property type="term" value="P:positive regulation of interleukin-6 production"/>
    <property type="evidence" value="ECO:0007669"/>
    <property type="project" value="Ensembl"/>
</dbReference>
<dbReference type="GO" id="GO:0051044">
    <property type="term" value="P:positive regulation of membrane protein ectodomain proteolysis"/>
    <property type="evidence" value="ECO:0007669"/>
    <property type="project" value="Ensembl"/>
</dbReference>
<dbReference type="GO" id="GO:0050769">
    <property type="term" value="P:positive regulation of neurogenesis"/>
    <property type="evidence" value="ECO:0007669"/>
    <property type="project" value="Ensembl"/>
</dbReference>
<dbReference type="GO" id="GO:0045429">
    <property type="term" value="P:positive regulation of nitric oxide biosynthetic process"/>
    <property type="evidence" value="ECO:0007669"/>
    <property type="project" value="Ensembl"/>
</dbReference>
<dbReference type="GO" id="GO:0045672">
    <property type="term" value="P:positive regulation of osteoclast differentiation"/>
    <property type="evidence" value="ECO:0007669"/>
    <property type="project" value="Ensembl"/>
</dbReference>
<dbReference type="GO" id="GO:0042307">
    <property type="term" value="P:positive regulation of protein import into nucleus"/>
    <property type="evidence" value="ECO:0007669"/>
    <property type="project" value="Ensembl"/>
</dbReference>
<dbReference type="GO" id="GO:0031334">
    <property type="term" value="P:positive regulation of protein-containing complex assembly"/>
    <property type="evidence" value="ECO:0007669"/>
    <property type="project" value="Ensembl"/>
</dbReference>
<dbReference type="GO" id="GO:0034393">
    <property type="term" value="P:positive regulation of smooth muscle cell apoptotic process"/>
    <property type="evidence" value="ECO:0007669"/>
    <property type="project" value="Ensembl"/>
</dbReference>
<dbReference type="GO" id="GO:2000309">
    <property type="term" value="P:positive regulation of tumor necrosis factor (ligand) superfamily member 11 production"/>
    <property type="evidence" value="ECO:0007669"/>
    <property type="project" value="Ensembl"/>
</dbReference>
<dbReference type="GO" id="GO:0060557">
    <property type="term" value="P:positive regulation of vitamin D biosynthetic process"/>
    <property type="evidence" value="ECO:0007669"/>
    <property type="project" value="Ensembl"/>
</dbReference>
<dbReference type="GO" id="GO:0050796">
    <property type="term" value="P:regulation of insulin secretion"/>
    <property type="evidence" value="ECO:0007669"/>
    <property type="project" value="Ensembl"/>
</dbReference>
<dbReference type="GO" id="GO:0060333">
    <property type="term" value="P:type II interferon-mediated signaling pathway"/>
    <property type="evidence" value="ECO:0007669"/>
    <property type="project" value="Ensembl"/>
</dbReference>
<dbReference type="GO" id="GO:0038196">
    <property type="term" value="P:type III interferon-mediated signaling pathway"/>
    <property type="evidence" value="ECO:0007669"/>
    <property type="project" value="Ensembl"/>
</dbReference>
<dbReference type="FunFam" id="1.20.1250.10:FF:000007">
    <property type="entry name" value="Interferon gamma"/>
    <property type="match status" value="1"/>
</dbReference>
<dbReference type="Gene3D" id="1.20.1250.10">
    <property type="match status" value="1"/>
</dbReference>
<dbReference type="InterPro" id="IPR009079">
    <property type="entry name" value="4_helix_cytokine-like_core"/>
</dbReference>
<dbReference type="InterPro" id="IPR002069">
    <property type="entry name" value="Interferon_gamma"/>
</dbReference>
<dbReference type="PANTHER" id="PTHR11419">
    <property type="entry name" value="INTERFERON GAMMA"/>
    <property type="match status" value="1"/>
</dbReference>
<dbReference type="PANTHER" id="PTHR11419:SF0">
    <property type="entry name" value="INTERFERON GAMMA"/>
    <property type="match status" value="1"/>
</dbReference>
<dbReference type="Pfam" id="PF00714">
    <property type="entry name" value="IFN-gamma"/>
    <property type="match status" value="1"/>
</dbReference>
<dbReference type="PIRSF" id="PIRSF001936">
    <property type="entry name" value="IFN-gamma"/>
    <property type="match status" value="1"/>
</dbReference>
<dbReference type="SUPFAM" id="SSF47266">
    <property type="entry name" value="4-helical cytokines"/>
    <property type="match status" value="1"/>
</dbReference>
<feature type="signal peptide" evidence="1">
    <location>
        <begin position="1"/>
        <end position="23"/>
    </location>
</feature>
<feature type="chain" id="PRO_0000016440" description="Interferon gamma">
    <location>
        <begin position="24"/>
        <end position="165"/>
    </location>
</feature>
<feature type="modified residue" description="Pyrrolidone carboxylic acid" evidence="2">
    <location>
        <position position="24"/>
    </location>
</feature>
<feature type="glycosylation site" description="N-linked (GlcNAc...) asparagine" evidence="4">
    <location>
        <position position="48"/>
    </location>
</feature>
<feature type="glycosylation site" description="N-linked (GlcNAc...) asparagine" evidence="4">
    <location>
        <position position="120"/>
    </location>
</feature>
<comment type="function">
    <text evidence="2 3">Type II interferon produced by immune cells such as T-cells and NK cells that plays crucial roles in antimicrobial, antiviral, and antitumor responses by activating effector immune cells and enhancing antigen presentation. Primarily signals through the JAK-STAT pathway after interaction with its receptor IFNGR1 to affect gene regulation. Upon IFNG binding, IFNGR1 intracellular domain opens out to allow association of downstream signaling components JAK2, JAK1 and STAT1, leading to STAT1 activation, nuclear translocation and transcription of IFNG-regulated genes. Many of the induced genes are transcription factors such as IRF1 that are able to further drive regulation of a next wave of transcription. Plays a role in class I antigen presentation pathway by inducing a replacement of catalytic proteasome subunits with immunoproteasome subunits. In turn, increases the quantity, quality, and repertoire of peptides for class I MHC loading. Increases the efficiency of peptide generation also by inducing the expression of activator PA28 that associates with the proteasome and alters its proteolytic cleavage preference. Up-regulates as well MHC II complexes on the cell surface by promoting expression of several key molecules such as cathepsins B/CTSB, H/CTSH, and L/CTSL (By similarity). Participates in the regulation of hematopoietic stem cells during development and under homeostatic conditions by affecting their development, quiescence, and differentiation (By similarity).</text>
</comment>
<comment type="subunit">
    <text evidence="2">Homodimer. Interacts with IFNGR1 (via extracellular domain); this interaction promotes IFNGR1 dimerization.</text>
</comment>
<comment type="subcellular location">
    <subcellularLocation>
        <location evidence="2">Secreted</location>
    </subcellularLocation>
</comment>
<comment type="tissue specificity">
    <text>Released primarily from activated T lymphocytes.</text>
</comment>
<comment type="similarity">
    <text evidence="5">Belongs to the type II (or gamma) interferon family.</text>
</comment>
<accession>P42162</accession>
<evidence type="ECO:0000250" key="1"/>
<evidence type="ECO:0000250" key="2">
    <source>
        <dbReference type="UniProtKB" id="P01579"/>
    </source>
</evidence>
<evidence type="ECO:0000250" key="3">
    <source>
        <dbReference type="UniProtKB" id="P01580"/>
    </source>
</evidence>
<evidence type="ECO:0000255" key="4"/>
<evidence type="ECO:0000305" key="5"/>
<protein>
    <recommendedName>
        <fullName>Interferon gamma</fullName>
        <shortName>IFN-gamma</shortName>
    </recommendedName>
</protein>
<reference key="1">
    <citation type="journal article" date="1995" name="J. Immunol.">
        <title>Comparative sequence analysis of cytokine genes from human and nonhuman primates.</title>
        <authorList>
            <person name="Villinger F.J."/>
            <person name="Brar S.S."/>
            <person name="Mayne A.E."/>
            <person name="Chikkala N."/>
            <person name="Ansari A.A."/>
        </authorList>
    </citation>
    <scope>NUCLEOTIDE SEQUENCE [MRNA]</scope>
</reference>
<keyword id="KW-0051">Antiviral defense</keyword>
<keyword id="KW-0202">Cytokine</keyword>
<keyword id="KW-0325">Glycoprotein</keyword>
<keyword id="KW-0341">Growth regulation</keyword>
<keyword id="KW-0873">Pyrrolidone carboxylic acid</keyword>
<keyword id="KW-1185">Reference proteome</keyword>
<keyword id="KW-0964">Secreted</keyword>
<keyword id="KW-0732">Signal</keyword>